<proteinExistence type="inferred from homology"/>
<comment type="function">
    <text evidence="2">Cell wall formation.</text>
</comment>
<comment type="catalytic activity">
    <reaction evidence="2">
        <text>2 D-alanine + ATP = D-alanyl-D-alanine + ADP + phosphate + H(+)</text>
        <dbReference type="Rhea" id="RHEA:11224"/>
        <dbReference type="ChEBI" id="CHEBI:15378"/>
        <dbReference type="ChEBI" id="CHEBI:30616"/>
        <dbReference type="ChEBI" id="CHEBI:43474"/>
        <dbReference type="ChEBI" id="CHEBI:57416"/>
        <dbReference type="ChEBI" id="CHEBI:57822"/>
        <dbReference type="ChEBI" id="CHEBI:456216"/>
        <dbReference type="EC" id="6.3.2.4"/>
    </reaction>
</comment>
<comment type="cofactor">
    <cofactor evidence="1">
        <name>Mg(2+)</name>
        <dbReference type="ChEBI" id="CHEBI:18420"/>
    </cofactor>
    <cofactor evidence="1">
        <name>Mn(2+)</name>
        <dbReference type="ChEBI" id="CHEBI:29035"/>
    </cofactor>
    <text evidence="1">Binds 2 magnesium or manganese ions per subunit.</text>
</comment>
<comment type="pathway">
    <text evidence="2">Cell wall biogenesis; peptidoglycan biosynthesis.</text>
</comment>
<comment type="subcellular location">
    <subcellularLocation>
        <location evidence="2">Cytoplasm</location>
    </subcellularLocation>
</comment>
<comment type="similarity">
    <text evidence="2">Belongs to the D-alanine--D-alanine ligase family.</text>
</comment>
<accession>O51927</accession>
<protein>
    <recommendedName>
        <fullName evidence="2">D-alanine--D-alanine ligase</fullName>
        <ecNumber evidence="2">6.3.2.4</ecNumber>
    </recommendedName>
    <alternativeName>
        <fullName evidence="2">D-Ala-D-Ala ligase</fullName>
    </alternativeName>
    <alternativeName>
        <fullName evidence="2">D-alanylalanine synthetase</fullName>
    </alternativeName>
</protein>
<reference key="1">
    <citation type="journal article" date="1998" name="Curr. Microbiol.">
        <title>Characterization of ftsZ, the cell division gene of Buchnera aphidicola (endosymbiont of aphids) and detection of the product.</title>
        <authorList>
            <person name="Baumann L."/>
            <person name="Baumann P."/>
        </authorList>
    </citation>
    <scope>NUCLEOTIDE SEQUENCE [GENOMIC DNA]</scope>
</reference>
<reference key="2">
    <citation type="journal article" date="2002" name="Science">
        <title>50 million years of genomic stasis in endosymbiotic bacteria.</title>
        <authorList>
            <person name="Tamas I."/>
            <person name="Klasson L."/>
            <person name="Canbaeck B."/>
            <person name="Naeslund A.K."/>
            <person name="Eriksson A.-S."/>
            <person name="Wernegreen J.J."/>
            <person name="Sandstroem J.P."/>
            <person name="Moran N.A."/>
            <person name="Andersson S.G.E."/>
        </authorList>
    </citation>
    <scope>NUCLEOTIDE SEQUENCE [LARGE SCALE GENOMIC DNA]</scope>
    <source>
        <strain>Sg</strain>
    </source>
</reference>
<sequence length="306" mass="34388">MKKKIAVLLGGNSSERKISIKSGYAILQSLLRSGFNAYAIDTRDFPIMQLKKQGFDSAYIALHGTGGEDGSIQGILEYLNIPYTGSGIMSSAISLDKWRTKLLWKSLSLRVLPDIYLQKKDISKYTYSYILKKILKLKFPVVIKPNNAGSSIGITIVNHPDLLIDSINLAFNYSNNIIIEKFLKGTEYTVSILNKKVLPPIKIITKNNFYDYSSKYIESSTEYICPSGLNYQKEEELKKIVEIAWNSLGCKGCGRIDAILDNKDKFWLLEINTIPGMTHRSLVPMAAKSIGISFDELILKILKINK</sequence>
<name>DDL_BUCAP</name>
<feature type="chain" id="PRO_0000177798" description="D-alanine--D-alanine ligase">
    <location>
        <begin position="1"/>
        <end position="306"/>
    </location>
</feature>
<feature type="domain" description="ATP-grasp" evidence="2">
    <location>
        <begin position="101"/>
        <end position="303"/>
    </location>
</feature>
<feature type="active site" evidence="1">
    <location>
        <position position="15"/>
    </location>
</feature>
<feature type="active site" evidence="1">
    <location>
        <position position="150"/>
    </location>
</feature>
<feature type="active site" evidence="1">
    <location>
        <position position="281"/>
    </location>
</feature>
<feature type="binding site" evidence="2">
    <location>
        <begin position="134"/>
        <end position="189"/>
    </location>
    <ligand>
        <name>ATP</name>
        <dbReference type="ChEBI" id="CHEBI:30616"/>
    </ligand>
</feature>
<feature type="binding site" evidence="2">
    <location>
        <position position="257"/>
    </location>
    <ligand>
        <name>Mg(2+)</name>
        <dbReference type="ChEBI" id="CHEBI:18420"/>
        <label>1</label>
    </ligand>
</feature>
<feature type="binding site" evidence="2">
    <location>
        <position position="270"/>
    </location>
    <ligand>
        <name>Mg(2+)</name>
        <dbReference type="ChEBI" id="CHEBI:18420"/>
        <label>1</label>
    </ligand>
</feature>
<feature type="binding site" evidence="2">
    <location>
        <position position="270"/>
    </location>
    <ligand>
        <name>Mg(2+)</name>
        <dbReference type="ChEBI" id="CHEBI:18420"/>
        <label>2</label>
    </ligand>
</feature>
<feature type="binding site" evidence="2">
    <location>
        <position position="272"/>
    </location>
    <ligand>
        <name>Mg(2+)</name>
        <dbReference type="ChEBI" id="CHEBI:18420"/>
        <label>2</label>
    </ligand>
</feature>
<feature type="sequence conflict" description="In Ref. 1; AAC46067." evidence="3" ref="1">
    <original>NS</original>
    <variation>IL</variation>
    <location>
        <begin position="12"/>
        <end position="13"/>
    </location>
</feature>
<feature type="sequence conflict" description="In Ref. 1; AAC46067." evidence="3" ref="1">
    <original>AKSIG</original>
    <variation>SKKYR</variation>
    <location>
        <begin position="287"/>
        <end position="291"/>
    </location>
</feature>
<feature type="sequence conflict" description="In Ref. 1; AAC46067." evidence="3" ref="1">
    <original>DE</original>
    <variation>VN</variation>
    <location>
        <begin position="295"/>
        <end position="296"/>
    </location>
</feature>
<evidence type="ECO:0000250" key="1"/>
<evidence type="ECO:0000255" key="2">
    <source>
        <dbReference type="HAMAP-Rule" id="MF_00047"/>
    </source>
</evidence>
<evidence type="ECO:0000305" key="3"/>
<gene>
    <name evidence="2" type="primary">ddl</name>
    <name type="synonym">ddlB</name>
    <name type="ordered locus">BUsg_208</name>
</gene>
<dbReference type="EC" id="6.3.2.4" evidence="2"/>
<dbReference type="EMBL" id="AF012886">
    <property type="protein sequence ID" value="AAC46067.1"/>
    <property type="molecule type" value="Genomic_DNA"/>
</dbReference>
<dbReference type="EMBL" id="AE013218">
    <property type="protein sequence ID" value="AAM67772.1"/>
    <property type="molecule type" value="Genomic_DNA"/>
</dbReference>
<dbReference type="RefSeq" id="WP_011053739.1">
    <property type="nucleotide sequence ID" value="NC_004061.1"/>
</dbReference>
<dbReference type="SMR" id="O51927"/>
<dbReference type="STRING" id="198804.BUsg_208"/>
<dbReference type="GeneID" id="93003675"/>
<dbReference type="KEGG" id="bas:BUsg_208"/>
<dbReference type="eggNOG" id="COG1181">
    <property type="taxonomic scope" value="Bacteria"/>
</dbReference>
<dbReference type="HOGENOM" id="CLU_039268_1_2_6"/>
<dbReference type="UniPathway" id="UPA00219"/>
<dbReference type="Proteomes" id="UP000000416">
    <property type="component" value="Chromosome"/>
</dbReference>
<dbReference type="GO" id="GO:0005829">
    <property type="term" value="C:cytosol"/>
    <property type="evidence" value="ECO:0007669"/>
    <property type="project" value="TreeGrafter"/>
</dbReference>
<dbReference type="GO" id="GO:0005524">
    <property type="term" value="F:ATP binding"/>
    <property type="evidence" value="ECO:0007669"/>
    <property type="project" value="UniProtKB-KW"/>
</dbReference>
<dbReference type="GO" id="GO:0008716">
    <property type="term" value="F:D-alanine-D-alanine ligase activity"/>
    <property type="evidence" value="ECO:0007669"/>
    <property type="project" value="UniProtKB-UniRule"/>
</dbReference>
<dbReference type="GO" id="GO:0046872">
    <property type="term" value="F:metal ion binding"/>
    <property type="evidence" value="ECO:0007669"/>
    <property type="project" value="UniProtKB-KW"/>
</dbReference>
<dbReference type="GO" id="GO:0071555">
    <property type="term" value="P:cell wall organization"/>
    <property type="evidence" value="ECO:0007669"/>
    <property type="project" value="UniProtKB-KW"/>
</dbReference>
<dbReference type="GO" id="GO:0009252">
    <property type="term" value="P:peptidoglycan biosynthetic process"/>
    <property type="evidence" value="ECO:0007669"/>
    <property type="project" value="UniProtKB-UniRule"/>
</dbReference>
<dbReference type="GO" id="GO:0008360">
    <property type="term" value="P:regulation of cell shape"/>
    <property type="evidence" value="ECO:0007669"/>
    <property type="project" value="UniProtKB-KW"/>
</dbReference>
<dbReference type="FunFam" id="3.30.470.20:FF:000008">
    <property type="entry name" value="D-alanine--D-alanine ligase"/>
    <property type="match status" value="1"/>
</dbReference>
<dbReference type="Gene3D" id="3.40.50.20">
    <property type="match status" value="1"/>
</dbReference>
<dbReference type="Gene3D" id="3.30.1490.20">
    <property type="entry name" value="ATP-grasp fold, A domain"/>
    <property type="match status" value="1"/>
</dbReference>
<dbReference type="Gene3D" id="3.30.470.20">
    <property type="entry name" value="ATP-grasp fold, B domain"/>
    <property type="match status" value="1"/>
</dbReference>
<dbReference type="HAMAP" id="MF_00047">
    <property type="entry name" value="Dala_Dala_lig"/>
    <property type="match status" value="1"/>
</dbReference>
<dbReference type="InterPro" id="IPR011761">
    <property type="entry name" value="ATP-grasp"/>
</dbReference>
<dbReference type="InterPro" id="IPR013815">
    <property type="entry name" value="ATP_grasp_subdomain_1"/>
</dbReference>
<dbReference type="InterPro" id="IPR000291">
    <property type="entry name" value="D-Ala_lig_Van_CS"/>
</dbReference>
<dbReference type="InterPro" id="IPR005905">
    <property type="entry name" value="D_ala_D_ala"/>
</dbReference>
<dbReference type="InterPro" id="IPR011095">
    <property type="entry name" value="Dala_Dala_lig_C"/>
</dbReference>
<dbReference type="InterPro" id="IPR011127">
    <property type="entry name" value="Dala_Dala_lig_N"/>
</dbReference>
<dbReference type="InterPro" id="IPR016185">
    <property type="entry name" value="PreATP-grasp_dom_sf"/>
</dbReference>
<dbReference type="NCBIfam" id="TIGR01205">
    <property type="entry name" value="D_ala_D_alaTIGR"/>
    <property type="match status" value="1"/>
</dbReference>
<dbReference type="NCBIfam" id="NF002378">
    <property type="entry name" value="PRK01372.1"/>
    <property type="match status" value="1"/>
</dbReference>
<dbReference type="PANTHER" id="PTHR23132">
    <property type="entry name" value="D-ALANINE--D-ALANINE LIGASE"/>
    <property type="match status" value="1"/>
</dbReference>
<dbReference type="PANTHER" id="PTHR23132:SF23">
    <property type="entry name" value="D-ALANINE--D-ALANINE LIGASE B"/>
    <property type="match status" value="1"/>
</dbReference>
<dbReference type="Pfam" id="PF07478">
    <property type="entry name" value="Dala_Dala_lig_C"/>
    <property type="match status" value="1"/>
</dbReference>
<dbReference type="Pfam" id="PF01820">
    <property type="entry name" value="Dala_Dala_lig_N"/>
    <property type="match status" value="1"/>
</dbReference>
<dbReference type="PIRSF" id="PIRSF039102">
    <property type="entry name" value="Ddl/VanB"/>
    <property type="match status" value="1"/>
</dbReference>
<dbReference type="SUPFAM" id="SSF56059">
    <property type="entry name" value="Glutathione synthetase ATP-binding domain-like"/>
    <property type="match status" value="1"/>
</dbReference>
<dbReference type="SUPFAM" id="SSF52440">
    <property type="entry name" value="PreATP-grasp domain"/>
    <property type="match status" value="1"/>
</dbReference>
<dbReference type="PROSITE" id="PS50975">
    <property type="entry name" value="ATP_GRASP"/>
    <property type="match status" value="1"/>
</dbReference>
<dbReference type="PROSITE" id="PS00843">
    <property type="entry name" value="DALA_DALA_LIGASE_1"/>
    <property type="match status" value="1"/>
</dbReference>
<dbReference type="PROSITE" id="PS00844">
    <property type="entry name" value="DALA_DALA_LIGASE_2"/>
    <property type="match status" value="1"/>
</dbReference>
<organism>
    <name type="scientific">Buchnera aphidicola subsp. Schizaphis graminum (strain Sg)</name>
    <dbReference type="NCBI Taxonomy" id="198804"/>
    <lineage>
        <taxon>Bacteria</taxon>
        <taxon>Pseudomonadati</taxon>
        <taxon>Pseudomonadota</taxon>
        <taxon>Gammaproteobacteria</taxon>
        <taxon>Enterobacterales</taxon>
        <taxon>Erwiniaceae</taxon>
        <taxon>Buchnera</taxon>
    </lineage>
</organism>
<keyword id="KW-0067">ATP-binding</keyword>
<keyword id="KW-0133">Cell shape</keyword>
<keyword id="KW-0961">Cell wall biogenesis/degradation</keyword>
<keyword id="KW-0963">Cytoplasm</keyword>
<keyword id="KW-0436">Ligase</keyword>
<keyword id="KW-0460">Magnesium</keyword>
<keyword id="KW-0464">Manganese</keyword>
<keyword id="KW-0479">Metal-binding</keyword>
<keyword id="KW-0547">Nucleotide-binding</keyword>
<keyword id="KW-0573">Peptidoglycan synthesis</keyword>